<proteinExistence type="evidence at transcript level"/>
<feature type="chain" id="PRO_0000073541" description="Calcyphosin-2">
    <location>
        <begin position="1"/>
        <end position="313"/>
    </location>
</feature>
<feature type="domain" description="EF-hand 1" evidence="1">
    <location>
        <begin position="144"/>
        <end position="179"/>
    </location>
</feature>
<feature type="domain" description="EF-hand 2" evidence="1">
    <location>
        <begin position="180"/>
        <end position="215"/>
    </location>
</feature>
<feature type="domain" description="EF-hand 3" evidence="1">
    <location>
        <begin position="216"/>
        <end position="251"/>
    </location>
</feature>
<feature type="binding site" evidence="1">
    <location>
        <position position="193"/>
    </location>
    <ligand>
        <name>Ca(2+)</name>
        <dbReference type="ChEBI" id="CHEBI:29108"/>
    </ligand>
</feature>
<feature type="binding site" evidence="1">
    <location>
        <position position="195"/>
    </location>
    <ligand>
        <name>Ca(2+)</name>
        <dbReference type="ChEBI" id="CHEBI:29108"/>
    </ligand>
</feature>
<feature type="binding site" evidence="1">
    <location>
        <position position="197"/>
    </location>
    <ligand>
        <name>Ca(2+)</name>
        <dbReference type="ChEBI" id="CHEBI:29108"/>
    </ligand>
</feature>
<feature type="binding site" evidence="1">
    <location>
        <position position="199"/>
    </location>
    <ligand>
        <name>Ca(2+)</name>
        <dbReference type="ChEBI" id="CHEBI:29108"/>
    </ligand>
</feature>
<feature type="binding site" evidence="1">
    <location>
        <position position="204"/>
    </location>
    <ligand>
        <name>Ca(2+)</name>
        <dbReference type="ChEBI" id="CHEBI:29108"/>
    </ligand>
</feature>
<organism>
    <name type="scientific">Macaca fascicularis</name>
    <name type="common">Crab-eating macaque</name>
    <name type="synonym">Cynomolgus monkey</name>
    <dbReference type="NCBI Taxonomy" id="9541"/>
    <lineage>
        <taxon>Eukaryota</taxon>
        <taxon>Metazoa</taxon>
        <taxon>Chordata</taxon>
        <taxon>Craniata</taxon>
        <taxon>Vertebrata</taxon>
        <taxon>Euteleostomi</taxon>
        <taxon>Mammalia</taxon>
        <taxon>Eutheria</taxon>
        <taxon>Euarchontoglires</taxon>
        <taxon>Primates</taxon>
        <taxon>Haplorrhini</taxon>
        <taxon>Catarrhini</taxon>
        <taxon>Cercopithecidae</taxon>
        <taxon>Cercopithecinae</taxon>
        <taxon>Macaca</taxon>
    </lineage>
</organism>
<reference key="1">
    <citation type="journal article" date="2001" name="Gene">
        <title>Assignment of 118 novel cDNAs of cynomolgus monkey brain to human chromosomes.</title>
        <authorList>
            <person name="Osada N."/>
            <person name="Hida M."/>
            <person name="Kususda J."/>
            <person name="Tanuma R."/>
            <person name="Iseki K."/>
            <person name="Hirata M."/>
            <person name="Suto Y."/>
            <person name="Hirai M."/>
            <person name="Terao K."/>
            <person name="Suzuki Y."/>
            <person name="Sugano S."/>
            <person name="Hashimoto K."/>
        </authorList>
    </citation>
    <scope>NUCLEOTIDE SEQUENCE [LARGE SCALE MRNA]</scope>
    <source>
        <tissue>Parietal cortex</tissue>
    </source>
</reference>
<gene>
    <name type="primary">CAPS2</name>
    <name type="ORF">QnpA-21934</name>
</gene>
<dbReference type="EMBL" id="AB052179">
    <property type="protein sequence ID" value="BAB18985.1"/>
    <property type="molecule type" value="mRNA"/>
</dbReference>
<dbReference type="SMR" id="Q9GKR6"/>
<dbReference type="STRING" id="9541.ENSMFAP00000000270"/>
<dbReference type="eggNOG" id="KOG0032">
    <property type="taxonomic scope" value="Eukaryota"/>
</dbReference>
<dbReference type="Proteomes" id="UP000233100">
    <property type="component" value="Unplaced"/>
</dbReference>
<dbReference type="GO" id="GO:0005509">
    <property type="term" value="F:calcium ion binding"/>
    <property type="evidence" value="ECO:0007669"/>
    <property type="project" value="InterPro"/>
</dbReference>
<dbReference type="CDD" id="cd00051">
    <property type="entry name" value="EFh"/>
    <property type="match status" value="1"/>
</dbReference>
<dbReference type="Gene3D" id="1.10.238.10">
    <property type="entry name" value="EF-hand"/>
    <property type="match status" value="2"/>
</dbReference>
<dbReference type="InterPro" id="IPR051581">
    <property type="entry name" value="Ca-bind_SignalingProt"/>
</dbReference>
<dbReference type="InterPro" id="IPR011992">
    <property type="entry name" value="EF-hand-dom_pair"/>
</dbReference>
<dbReference type="InterPro" id="IPR018247">
    <property type="entry name" value="EF_Hand_1_Ca_BS"/>
</dbReference>
<dbReference type="InterPro" id="IPR002048">
    <property type="entry name" value="EF_hand_dom"/>
</dbReference>
<dbReference type="PANTHER" id="PTHR34524">
    <property type="entry name" value="CALCYPHOSIN"/>
    <property type="match status" value="1"/>
</dbReference>
<dbReference type="PANTHER" id="PTHR34524:SF3">
    <property type="entry name" value="CALCYPHOSIN-2"/>
    <property type="match status" value="1"/>
</dbReference>
<dbReference type="Pfam" id="PF13499">
    <property type="entry name" value="EF-hand_7"/>
    <property type="match status" value="1"/>
</dbReference>
<dbReference type="Pfam" id="PF25348">
    <property type="entry name" value="PH_CAYP2"/>
    <property type="match status" value="1"/>
</dbReference>
<dbReference type="SMART" id="SM00054">
    <property type="entry name" value="EFh"/>
    <property type="match status" value="2"/>
</dbReference>
<dbReference type="SUPFAM" id="SSF47473">
    <property type="entry name" value="EF-hand"/>
    <property type="match status" value="1"/>
</dbReference>
<dbReference type="PROSITE" id="PS00018">
    <property type="entry name" value="EF_HAND_1"/>
    <property type="match status" value="1"/>
</dbReference>
<dbReference type="PROSITE" id="PS50222">
    <property type="entry name" value="EF_HAND_2"/>
    <property type="match status" value="3"/>
</dbReference>
<sequence>MSRNGRDACRELIGFFFTHDQSLTIYEYRQFGKNRTIVLPFIQKSIYSHQCGRRKGKQYRLGDFYVGATLTFLSSDHASLPESIKENTFLKLRITHIDQIALDSLKTASMDQEDDIVIQETNDRLVFKAIQDVLKEKLHKRGVRILTGLGKYFQQLDKEGNGLLDKADFKQALKVFHLEVSEKDFESAWLILDDNGNGKVDYGEFKRGIIGEMNEYRKSYVRKAFMKLDFNKTGSVPITNIRKCYCAKKHSQVISGHSTEEEIKSSFLETLKVACSKSDEVSYGEFEDYYEGLSIEIIDDEDFVTILRTPWGI</sequence>
<name>CAYP2_MACFA</name>
<evidence type="ECO:0000255" key="1">
    <source>
        <dbReference type="PROSITE-ProRule" id="PRU00448"/>
    </source>
</evidence>
<protein>
    <recommendedName>
        <fullName>Calcyphosin-2</fullName>
    </recommendedName>
    <alternativeName>
        <fullName>Calcyphosine-2</fullName>
    </alternativeName>
</protein>
<accession>Q9GKR6</accession>
<keyword id="KW-0106">Calcium</keyword>
<keyword id="KW-0479">Metal-binding</keyword>
<keyword id="KW-1185">Reference proteome</keyword>
<keyword id="KW-0677">Repeat</keyword>